<proteinExistence type="inferred from homology"/>
<reference key="1">
    <citation type="journal article" date="2003" name="Nature">
        <title>Unique physiological and pathogenic features of Leptospira interrogans revealed by whole-genome sequencing.</title>
        <authorList>
            <person name="Ren S.-X."/>
            <person name="Fu G."/>
            <person name="Jiang X.-G."/>
            <person name="Zeng R."/>
            <person name="Miao Y.-G."/>
            <person name="Xu H."/>
            <person name="Zhang Y.-X."/>
            <person name="Xiong H."/>
            <person name="Lu G."/>
            <person name="Lu L.-F."/>
            <person name="Jiang H.-Q."/>
            <person name="Jia J."/>
            <person name="Tu Y.-F."/>
            <person name="Jiang J.-X."/>
            <person name="Gu W.-Y."/>
            <person name="Zhang Y.-Q."/>
            <person name="Cai Z."/>
            <person name="Sheng H.-H."/>
            <person name="Yin H.-F."/>
            <person name="Zhang Y."/>
            <person name="Zhu G.-F."/>
            <person name="Wan M."/>
            <person name="Huang H.-L."/>
            <person name="Qian Z."/>
            <person name="Wang S.-Y."/>
            <person name="Ma W."/>
            <person name="Yao Z.-J."/>
            <person name="Shen Y."/>
            <person name="Qiang B.-Q."/>
            <person name="Xia Q.-C."/>
            <person name="Guo X.-K."/>
            <person name="Danchin A."/>
            <person name="Saint Girons I."/>
            <person name="Somerville R.L."/>
            <person name="Wen Y.-M."/>
            <person name="Shi M.-H."/>
            <person name="Chen Z."/>
            <person name="Xu J.-G."/>
            <person name="Zhao G.-P."/>
        </authorList>
    </citation>
    <scope>NUCLEOTIDE SEQUENCE [LARGE SCALE GENOMIC DNA]</scope>
    <source>
        <strain>56601</strain>
    </source>
</reference>
<name>Y292_LEPIN</name>
<sequence>MKPPVNQSCQHYPECAGCDRLHIGYEKQLQHKQEEIEKRFKGFKGLEIRQIIKSPKDQMYRHKVQLPFGHRKIGKKSVLTLGLHNKENTFIIDQKECRIQDEDLTTVAAAIRHWARNENLEPYHEKKGSGLLRHIVLRKANATQEILVGIVTNESEIPGRKKLTDRLYSYIQQFLYKENSKADVVGILQNVNRKNTKVVLGEKEVTWYGRHFVKEKIGKLDFQIGLSTFFQVNPFQIENLYNLILEDLPENKCVVDAYCGIGTISLYIASKSKKVIGLEENSSSIRSAIGASKANGIENVHFIKGKVLDTLRAALNENSDVVVLDPPREGLDAETKSILLNSKVNQILYVSCNPETLLRDAIELTKSFKYEKITPVDLFPHTSHLESVSVFTK</sequence>
<keyword id="KW-0004">4Fe-4S</keyword>
<keyword id="KW-0408">Iron</keyword>
<keyword id="KW-0411">Iron-sulfur</keyword>
<keyword id="KW-0479">Metal-binding</keyword>
<keyword id="KW-0489">Methyltransferase</keyword>
<keyword id="KW-1185">Reference proteome</keyword>
<keyword id="KW-0949">S-adenosyl-L-methionine</keyword>
<keyword id="KW-0808">Transferase</keyword>
<dbReference type="EC" id="2.1.1.-"/>
<dbReference type="EMBL" id="AE010300">
    <property type="protein sequence ID" value="AAN47491.1"/>
    <property type="molecule type" value="Genomic_DNA"/>
</dbReference>
<dbReference type="RefSeq" id="NP_710473.1">
    <property type="nucleotide sequence ID" value="NC_004342.2"/>
</dbReference>
<dbReference type="SMR" id="Q8F9A3"/>
<dbReference type="FunCoup" id="Q8F9A3">
    <property type="interactions" value="48"/>
</dbReference>
<dbReference type="STRING" id="189518.LA_0292"/>
<dbReference type="PaxDb" id="189518-LA_0292"/>
<dbReference type="EnsemblBacteria" id="AAN47491">
    <property type="protein sequence ID" value="AAN47491"/>
    <property type="gene ID" value="LA_0292"/>
</dbReference>
<dbReference type="KEGG" id="lil:LA_0292"/>
<dbReference type="PATRIC" id="fig|189518.3.peg.294"/>
<dbReference type="HOGENOM" id="CLU_014689_7_2_12"/>
<dbReference type="InParanoid" id="Q8F9A3"/>
<dbReference type="OrthoDB" id="9804590at2"/>
<dbReference type="Proteomes" id="UP000001408">
    <property type="component" value="Chromosome I"/>
</dbReference>
<dbReference type="GO" id="GO:0051539">
    <property type="term" value="F:4 iron, 4 sulfur cluster binding"/>
    <property type="evidence" value="ECO:0007669"/>
    <property type="project" value="UniProtKB-KW"/>
</dbReference>
<dbReference type="GO" id="GO:0046872">
    <property type="term" value="F:metal ion binding"/>
    <property type="evidence" value="ECO:0007669"/>
    <property type="project" value="UniProtKB-KW"/>
</dbReference>
<dbReference type="GO" id="GO:0070041">
    <property type="term" value="F:rRNA (uridine-C5-)-methyltransferase activity"/>
    <property type="evidence" value="ECO:0000318"/>
    <property type="project" value="GO_Central"/>
</dbReference>
<dbReference type="GO" id="GO:0070475">
    <property type="term" value="P:rRNA base methylation"/>
    <property type="evidence" value="ECO:0000318"/>
    <property type="project" value="GO_Central"/>
</dbReference>
<dbReference type="CDD" id="cd02440">
    <property type="entry name" value="AdoMet_MTases"/>
    <property type="match status" value="1"/>
</dbReference>
<dbReference type="Gene3D" id="2.40.50.1070">
    <property type="match status" value="1"/>
</dbReference>
<dbReference type="Gene3D" id="3.40.50.150">
    <property type="entry name" value="Vaccinia Virus protein VP39"/>
    <property type="match status" value="1"/>
</dbReference>
<dbReference type="InterPro" id="IPR030390">
    <property type="entry name" value="MeTrfase_TrmA_AS"/>
</dbReference>
<dbReference type="InterPro" id="IPR030391">
    <property type="entry name" value="MeTrfase_TrmA_CS"/>
</dbReference>
<dbReference type="InterPro" id="IPR029063">
    <property type="entry name" value="SAM-dependent_MTases_sf"/>
</dbReference>
<dbReference type="InterPro" id="IPR010280">
    <property type="entry name" value="U5_MeTrfase_fam"/>
</dbReference>
<dbReference type="NCBIfam" id="TIGR00479">
    <property type="entry name" value="rumA"/>
    <property type="match status" value="1"/>
</dbReference>
<dbReference type="PANTHER" id="PTHR11061">
    <property type="entry name" value="RNA M5U METHYLTRANSFERASE"/>
    <property type="match status" value="1"/>
</dbReference>
<dbReference type="PANTHER" id="PTHR11061:SF30">
    <property type="entry name" value="TRNA (URACIL(54)-C(5))-METHYLTRANSFERASE"/>
    <property type="match status" value="1"/>
</dbReference>
<dbReference type="Pfam" id="PF05958">
    <property type="entry name" value="tRNA_U5-meth_tr"/>
    <property type="match status" value="1"/>
</dbReference>
<dbReference type="SUPFAM" id="SSF53335">
    <property type="entry name" value="S-adenosyl-L-methionine-dependent methyltransferases"/>
    <property type="match status" value="1"/>
</dbReference>
<dbReference type="PROSITE" id="PS51687">
    <property type="entry name" value="SAM_MT_RNA_M5U"/>
    <property type="match status" value="1"/>
</dbReference>
<dbReference type="PROSITE" id="PS01230">
    <property type="entry name" value="TRMA_1"/>
    <property type="match status" value="1"/>
</dbReference>
<dbReference type="PROSITE" id="PS01231">
    <property type="entry name" value="TRMA_2"/>
    <property type="match status" value="1"/>
</dbReference>
<protein>
    <recommendedName>
        <fullName>Uncharacterized RNA methyltransferase LA_0292</fullName>
        <ecNumber>2.1.1.-</ecNumber>
    </recommendedName>
</protein>
<gene>
    <name type="ordered locus">LA_0292</name>
</gene>
<accession>Q8F9A3</accession>
<evidence type="ECO:0000250" key="1"/>
<evidence type="ECO:0000255" key="2">
    <source>
        <dbReference type="PROSITE-ProRule" id="PRU01024"/>
    </source>
</evidence>
<organism>
    <name type="scientific">Leptospira interrogans serogroup Icterohaemorrhagiae serovar Lai (strain 56601)</name>
    <dbReference type="NCBI Taxonomy" id="189518"/>
    <lineage>
        <taxon>Bacteria</taxon>
        <taxon>Pseudomonadati</taxon>
        <taxon>Spirochaetota</taxon>
        <taxon>Spirochaetia</taxon>
        <taxon>Leptospirales</taxon>
        <taxon>Leptospiraceae</taxon>
        <taxon>Leptospira</taxon>
    </lineage>
</organism>
<feature type="chain" id="PRO_0000161995" description="Uncharacterized RNA methyltransferase LA_0292">
    <location>
        <begin position="1"/>
        <end position="393"/>
    </location>
</feature>
<feature type="active site" description="Nucleophile" evidence="2">
    <location>
        <position position="352"/>
    </location>
</feature>
<feature type="binding site" evidence="1">
    <location>
        <position position="9"/>
    </location>
    <ligand>
        <name>[4Fe-4S] cluster</name>
        <dbReference type="ChEBI" id="CHEBI:49883"/>
    </ligand>
</feature>
<feature type="binding site" evidence="1">
    <location>
        <position position="15"/>
    </location>
    <ligand>
        <name>[4Fe-4S] cluster</name>
        <dbReference type="ChEBI" id="CHEBI:49883"/>
    </ligand>
</feature>
<feature type="binding site" evidence="1">
    <location>
        <position position="18"/>
    </location>
    <ligand>
        <name>[4Fe-4S] cluster</name>
        <dbReference type="ChEBI" id="CHEBI:49883"/>
    </ligand>
</feature>
<feature type="binding site" evidence="1">
    <location>
        <position position="97"/>
    </location>
    <ligand>
        <name>[4Fe-4S] cluster</name>
        <dbReference type="ChEBI" id="CHEBI:49883"/>
    </ligand>
</feature>
<feature type="binding site" evidence="2">
    <location>
        <position position="231"/>
    </location>
    <ligand>
        <name>S-adenosyl-L-methionine</name>
        <dbReference type="ChEBI" id="CHEBI:59789"/>
    </ligand>
</feature>
<feature type="binding site" evidence="2">
    <location>
        <position position="258"/>
    </location>
    <ligand>
        <name>S-adenosyl-L-methionine</name>
        <dbReference type="ChEBI" id="CHEBI:59789"/>
    </ligand>
</feature>
<feature type="binding site" evidence="2">
    <location>
        <position position="279"/>
    </location>
    <ligand>
        <name>S-adenosyl-L-methionine</name>
        <dbReference type="ChEBI" id="CHEBI:59789"/>
    </ligand>
</feature>
<feature type="binding site" evidence="2">
    <location>
        <position position="325"/>
    </location>
    <ligand>
        <name>S-adenosyl-L-methionine</name>
        <dbReference type="ChEBI" id="CHEBI:59789"/>
    </ligand>
</feature>
<comment type="similarity">
    <text evidence="2">Belongs to the class I-like SAM-binding methyltransferase superfamily. RNA M5U methyltransferase family.</text>
</comment>